<comment type="subcellular location">
    <subcellularLocation>
        <location evidence="1">Secreted</location>
    </subcellularLocation>
</comment>
<comment type="tissue specificity">
    <text>Expressed by the venom gland.</text>
</comment>
<comment type="domain">
    <text evidence="1">The presence of a 'disulfide through disulfide knot' structurally defines this protein as a knottin.</text>
</comment>
<comment type="similarity">
    <text evidence="3">Belongs to the neurotoxin 19 (CSTX) family. 01 subfamily.</text>
</comment>
<proteinExistence type="evidence at transcript level"/>
<organism>
    <name type="scientific">Lycosa singoriensis</name>
    <name type="common">Wolf spider</name>
    <name type="synonym">Aranea singoriensis</name>
    <dbReference type="NCBI Taxonomy" id="434756"/>
    <lineage>
        <taxon>Eukaryota</taxon>
        <taxon>Metazoa</taxon>
        <taxon>Ecdysozoa</taxon>
        <taxon>Arthropoda</taxon>
        <taxon>Chelicerata</taxon>
        <taxon>Arachnida</taxon>
        <taxon>Araneae</taxon>
        <taxon>Araneomorphae</taxon>
        <taxon>Entelegynae</taxon>
        <taxon>Lycosoidea</taxon>
        <taxon>Lycosidae</taxon>
        <taxon>Lycosa</taxon>
    </lineage>
</organism>
<protein>
    <recommendedName>
        <fullName>U3-lycotoxin-Ls1a</fullName>
    </recommendedName>
    <alternativeName>
        <fullName>Toxin-like structure LSTX-B8</fullName>
    </alternativeName>
</protein>
<evidence type="ECO:0000250" key="1"/>
<evidence type="ECO:0000255" key="2"/>
<evidence type="ECO:0000305" key="3"/>
<accession>B6DCQ3</accession>
<reference key="1">
    <citation type="journal article" date="2010" name="Zoology">
        <title>Transcriptome analysis of the venom glands of the Chinese wolf spider Lycosa singoriensis.</title>
        <authorList>
            <person name="Zhang Y."/>
            <person name="Chen J."/>
            <person name="Tang X."/>
            <person name="Wang F."/>
            <person name="Jiang L."/>
            <person name="Xiong X."/>
            <person name="Wang M."/>
            <person name="Rong M."/>
            <person name="Liu Z."/>
            <person name="Liang S."/>
        </authorList>
    </citation>
    <scope>NUCLEOTIDE SEQUENCE [LARGE SCALE MRNA]</scope>
    <source>
        <tissue>Venom gland</tissue>
    </source>
</reference>
<feature type="signal peptide" evidence="2">
    <location>
        <begin position="1"/>
        <end position="20"/>
    </location>
</feature>
<feature type="propeptide" id="PRO_0000401621" evidence="1">
    <location>
        <begin position="21"/>
        <end position="44"/>
    </location>
</feature>
<feature type="chain" id="PRO_0000401622" description="U3-lycotoxin-Ls1a">
    <location>
        <begin position="45"/>
        <end position="115"/>
    </location>
</feature>
<feature type="disulfide bond" evidence="1">
    <location>
        <begin position="48"/>
        <end position="63"/>
    </location>
</feature>
<feature type="disulfide bond" evidence="1">
    <location>
        <begin position="55"/>
        <end position="72"/>
    </location>
</feature>
<feature type="disulfide bond" evidence="1">
    <location>
        <begin position="62"/>
        <end position="87"/>
    </location>
</feature>
<feature type="disulfide bond" evidence="1">
    <location>
        <begin position="74"/>
        <end position="85"/>
    </location>
</feature>
<dbReference type="EMBL" id="EU925987">
    <property type="protein sequence ID" value="ACI41319.1"/>
    <property type="molecule type" value="mRNA"/>
</dbReference>
<dbReference type="EMBL" id="FM863991">
    <property type="protein sequence ID" value="CAS03589.1"/>
    <property type="molecule type" value="mRNA"/>
</dbReference>
<dbReference type="SMR" id="B6DCQ3"/>
<dbReference type="ArachnoServer" id="AS000938">
    <property type="toxin name" value="U3-lycotoxin-Ls1a"/>
</dbReference>
<dbReference type="GO" id="GO:0005576">
    <property type="term" value="C:extracellular region"/>
    <property type="evidence" value="ECO:0007669"/>
    <property type="project" value="UniProtKB-SubCell"/>
</dbReference>
<dbReference type="GO" id="GO:0090729">
    <property type="term" value="F:toxin activity"/>
    <property type="evidence" value="ECO:0007669"/>
    <property type="project" value="UniProtKB-KW"/>
</dbReference>
<dbReference type="InterPro" id="IPR011142">
    <property type="entry name" value="Spider_toxin_CSTX_Knottin_CS"/>
</dbReference>
<dbReference type="PROSITE" id="PS60029">
    <property type="entry name" value="SPIDER_CSTX"/>
    <property type="match status" value="1"/>
</dbReference>
<keyword id="KW-1015">Disulfide bond</keyword>
<keyword id="KW-0960">Knottin</keyword>
<keyword id="KW-0964">Secreted</keyword>
<keyword id="KW-0732">Signal</keyword>
<keyword id="KW-0800">Toxin</keyword>
<name>TX308_LYCSI</name>
<sequence>MKFVLLFGVLLVTFFSYSSAEMLDDFDQADEDELLSLIEKGEARAKECTPRFYDCSHDRHSCCRSELFKDVCTCFYPEGGDNEVCTCQQPKHLKYMEKAADKAKKFGGKIKKWFG</sequence>